<protein>
    <recommendedName>
        <fullName>Putative dioxygenase RBE_0329</fullName>
        <ecNumber>1.13.11.-</ecNumber>
    </recommendedName>
</protein>
<proteinExistence type="inferred from homology"/>
<organism>
    <name type="scientific">Rickettsia bellii (strain RML369-C)</name>
    <dbReference type="NCBI Taxonomy" id="336407"/>
    <lineage>
        <taxon>Bacteria</taxon>
        <taxon>Pseudomonadati</taxon>
        <taxon>Pseudomonadota</taxon>
        <taxon>Alphaproteobacteria</taxon>
        <taxon>Rickettsiales</taxon>
        <taxon>Rickettsiaceae</taxon>
        <taxon>Rickettsieae</taxon>
        <taxon>Rickettsia</taxon>
        <taxon>belli group</taxon>
    </lineage>
</organism>
<keyword id="KW-0223">Dioxygenase</keyword>
<keyword id="KW-0560">Oxidoreductase</keyword>
<name>Y329_RICBR</name>
<reference key="1">
    <citation type="journal article" date="2006" name="PLoS Genet.">
        <title>Genome sequence of Rickettsia bellii illuminates the role of amoebae in gene exchanges between intracellular pathogens.</title>
        <authorList>
            <person name="Ogata H."/>
            <person name="La Scola B."/>
            <person name="Audic S."/>
            <person name="Renesto P."/>
            <person name="Blanc G."/>
            <person name="Robert C."/>
            <person name="Fournier P.-E."/>
            <person name="Claverie J.-M."/>
            <person name="Raoult D."/>
        </authorList>
    </citation>
    <scope>NUCLEOTIDE SEQUENCE [LARGE SCALE GENOMIC DNA]</scope>
    <source>
        <strain>RML369-C</strain>
    </source>
</reference>
<comment type="similarity">
    <text evidence="1">Belongs to the intradiol ring-cleavage dioxygenase family.</text>
</comment>
<feature type="chain" id="PRO_0000280767" description="Putative dioxygenase RBE_0329">
    <location>
        <begin position="1"/>
        <end position="208"/>
    </location>
</feature>
<accession>Q1RJQ4</accession>
<sequence>MKKFIFCFLCFWTLNIFAASKGYPNKLNRCKITRNIFNDYEPKVFEPTNNLLRKTGQISRFYGEKVIIKGIVLDQNCVPVADAKVYLWQAGSGGKYPYEPLKTRVDKRRFTGKKDSSFTGSGTATTNNKGEYYFVSMLPYKSVGNLKSVNIRVEHADLKTLETRLDLSNKNICSNECGEINPALIEPQQHLRSYCFDLVLQGATLKRY</sequence>
<gene>
    <name type="ordered locus">RBE_0329</name>
</gene>
<evidence type="ECO:0000305" key="1"/>
<dbReference type="EC" id="1.13.11.-"/>
<dbReference type="EMBL" id="CP000087">
    <property type="protein sequence ID" value="ABE04410.1"/>
    <property type="molecule type" value="Genomic_DNA"/>
</dbReference>
<dbReference type="RefSeq" id="WP_011477021.1">
    <property type="nucleotide sequence ID" value="NC_007940.1"/>
</dbReference>
<dbReference type="SMR" id="Q1RJQ4"/>
<dbReference type="KEGG" id="rbe:RBE_0329"/>
<dbReference type="eggNOG" id="COG3485">
    <property type="taxonomic scope" value="Bacteria"/>
</dbReference>
<dbReference type="HOGENOM" id="CLU_1320101_0_0_5"/>
<dbReference type="OrthoDB" id="9805815at2"/>
<dbReference type="Proteomes" id="UP000001951">
    <property type="component" value="Chromosome"/>
</dbReference>
<dbReference type="GO" id="GO:0008199">
    <property type="term" value="F:ferric iron binding"/>
    <property type="evidence" value="ECO:0007669"/>
    <property type="project" value="InterPro"/>
</dbReference>
<dbReference type="GO" id="GO:0016702">
    <property type="term" value="F:oxidoreductase activity, acting on single donors with incorporation of molecular oxygen, incorporation of two atoms of oxygen"/>
    <property type="evidence" value="ECO:0007669"/>
    <property type="project" value="InterPro"/>
</dbReference>
<dbReference type="Gene3D" id="2.60.130.10">
    <property type="entry name" value="Aromatic compound dioxygenase"/>
    <property type="match status" value="1"/>
</dbReference>
<dbReference type="InterPro" id="IPR000627">
    <property type="entry name" value="Intradiol_dOase_C"/>
</dbReference>
<dbReference type="InterPro" id="IPR015889">
    <property type="entry name" value="Intradiol_dOase_core"/>
</dbReference>
<dbReference type="InterPro" id="IPR050770">
    <property type="entry name" value="Intradiol_RC_Dioxygenase"/>
</dbReference>
<dbReference type="PANTHER" id="PTHR33711">
    <property type="entry name" value="DIOXYGENASE, PUTATIVE (AFU_ORTHOLOGUE AFUA_2G02910)-RELATED"/>
    <property type="match status" value="1"/>
</dbReference>
<dbReference type="PANTHER" id="PTHR33711:SF10">
    <property type="entry name" value="INTRADIOL RING-CLEAVAGE DIOXYGENASES DOMAIN-CONTAINING PROTEIN"/>
    <property type="match status" value="1"/>
</dbReference>
<dbReference type="Pfam" id="PF00775">
    <property type="entry name" value="Dioxygenase_C"/>
    <property type="match status" value="1"/>
</dbReference>
<dbReference type="SUPFAM" id="SSF49482">
    <property type="entry name" value="Aromatic compound dioxygenase"/>
    <property type="match status" value="1"/>
</dbReference>